<reference key="1">
    <citation type="journal article" date="2006" name="Proc. Natl. Acad. Sci. U.S.A.">
        <title>Molecular genetic anatomy of inter- and intraserotype variation in the human bacterial pathogen group A Streptococcus.</title>
        <authorList>
            <person name="Beres S.B."/>
            <person name="Richter E.W."/>
            <person name="Nagiec M.J."/>
            <person name="Sumby P."/>
            <person name="Porcella S.F."/>
            <person name="DeLeo F.R."/>
            <person name="Musser J.M."/>
        </authorList>
    </citation>
    <scope>NUCLEOTIDE SEQUENCE [LARGE SCALE GENOMIC DNA]</scope>
    <source>
        <strain>MGAS10270</strain>
    </source>
</reference>
<comment type="function">
    <text evidence="1">With S4 and S12 plays an important role in translational accuracy.</text>
</comment>
<comment type="function">
    <text evidence="1">Located at the back of the 30S subunit body where it stabilizes the conformation of the head with respect to the body.</text>
</comment>
<comment type="subunit">
    <text evidence="1">Part of the 30S ribosomal subunit. Contacts proteins S4 and S8.</text>
</comment>
<comment type="domain">
    <text>The N-terminal domain interacts with the head of the 30S subunit; the C-terminal domain interacts with the body and contacts protein S4. The interaction surface between S4 and S5 is involved in control of translational fidelity.</text>
</comment>
<comment type="similarity">
    <text evidence="1">Belongs to the universal ribosomal protein uS5 family.</text>
</comment>
<name>RS5_STRPD</name>
<gene>
    <name evidence="1" type="primary">rpsE</name>
    <name type="ordered locus">MGAS10270_Spy0063</name>
</gene>
<dbReference type="EMBL" id="CP000260">
    <property type="protein sequence ID" value="ABF33128.1"/>
    <property type="molecule type" value="Genomic_DNA"/>
</dbReference>
<dbReference type="RefSeq" id="WP_002986625.1">
    <property type="nucleotide sequence ID" value="NZ_CVUH01000001.1"/>
</dbReference>
<dbReference type="SMR" id="Q1JJ45"/>
<dbReference type="GeneID" id="69900043"/>
<dbReference type="KEGG" id="sph:MGAS10270_Spy0063"/>
<dbReference type="HOGENOM" id="CLU_065898_2_2_9"/>
<dbReference type="Proteomes" id="UP000002436">
    <property type="component" value="Chromosome"/>
</dbReference>
<dbReference type="GO" id="GO:0015935">
    <property type="term" value="C:small ribosomal subunit"/>
    <property type="evidence" value="ECO:0007669"/>
    <property type="project" value="InterPro"/>
</dbReference>
<dbReference type="GO" id="GO:0019843">
    <property type="term" value="F:rRNA binding"/>
    <property type="evidence" value="ECO:0007669"/>
    <property type="project" value="UniProtKB-UniRule"/>
</dbReference>
<dbReference type="GO" id="GO:0003735">
    <property type="term" value="F:structural constituent of ribosome"/>
    <property type="evidence" value="ECO:0007669"/>
    <property type="project" value="InterPro"/>
</dbReference>
<dbReference type="GO" id="GO:0006412">
    <property type="term" value="P:translation"/>
    <property type="evidence" value="ECO:0007669"/>
    <property type="project" value="UniProtKB-UniRule"/>
</dbReference>
<dbReference type="FunFam" id="3.30.160.20:FF:000001">
    <property type="entry name" value="30S ribosomal protein S5"/>
    <property type="match status" value="1"/>
</dbReference>
<dbReference type="FunFam" id="3.30.230.10:FF:000002">
    <property type="entry name" value="30S ribosomal protein S5"/>
    <property type="match status" value="1"/>
</dbReference>
<dbReference type="Gene3D" id="3.30.160.20">
    <property type="match status" value="1"/>
</dbReference>
<dbReference type="Gene3D" id="3.30.230.10">
    <property type="match status" value="1"/>
</dbReference>
<dbReference type="HAMAP" id="MF_01307_B">
    <property type="entry name" value="Ribosomal_uS5_B"/>
    <property type="match status" value="1"/>
</dbReference>
<dbReference type="InterPro" id="IPR020568">
    <property type="entry name" value="Ribosomal_Su5_D2-typ_SF"/>
</dbReference>
<dbReference type="InterPro" id="IPR000851">
    <property type="entry name" value="Ribosomal_uS5"/>
</dbReference>
<dbReference type="InterPro" id="IPR005712">
    <property type="entry name" value="Ribosomal_uS5_bac-type"/>
</dbReference>
<dbReference type="InterPro" id="IPR005324">
    <property type="entry name" value="Ribosomal_uS5_C"/>
</dbReference>
<dbReference type="InterPro" id="IPR013810">
    <property type="entry name" value="Ribosomal_uS5_N"/>
</dbReference>
<dbReference type="InterPro" id="IPR018192">
    <property type="entry name" value="Ribosomal_uS5_N_CS"/>
</dbReference>
<dbReference type="InterPro" id="IPR014721">
    <property type="entry name" value="Ribsml_uS5_D2-typ_fold_subgr"/>
</dbReference>
<dbReference type="NCBIfam" id="TIGR01021">
    <property type="entry name" value="rpsE_bact"/>
    <property type="match status" value="1"/>
</dbReference>
<dbReference type="PANTHER" id="PTHR48277">
    <property type="entry name" value="MITOCHONDRIAL RIBOSOMAL PROTEIN S5"/>
    <property type="match status" value="1"/>
</dbReference>
<dbReference type="PANTHER" id="PTHR48277:SF1">
    <property type="entry name" value="MITOCHONDRIAL RIBOSOMAL PROTEIN S5"/>
    <property type="match status" value="1"/>
</dbReference>
<dbReference type="Pfam" id="PF00333">
    <property type="entry name" value="Ribosomal_S5"/>
    <property type="match status" value="1"/>
</dbReference>
<dbReference type="Pfam" id="PF03719">
    <property type="entry name" value="Ribosomal_S5_C"/>
    <property type="match status" value="1"/>
</dbReference>
<dbReference type="SUPFAM" id="SSF54768">
    <property type="entry name" value="dsRNA-binding domain-like"/>
    <property type="match status" value="1"/>
</dbReference>
<dbReference type="SUPFAM" id="SSF54211">
    <property type="entry name" value="Ribosomal protein S5 domain 2-like"/>
    <property type="match status" value="1"/>
</dbReference>
<dbReference type="PROSITE" id="PS00585">
    <property type="entry name" value="RIBOSOMAL_S5"/>
    <property type="match status" value="1"/>
</dbReference>
<dbReference type="PROSITE" id="PS50881">
    <property type="entry name" value="S5_DSRBD"/>
    <property type="match status" value="1"/>
</dbReference>
<keyword id="KW-0687">Ribonucleoprotein</keyword>
<keyword id="KW-0689">Ribosomal protein</keyword>
<keyword id="KW-0694">RNA-binding</keyword>
<keyword id="KW-0699">rRNA-binding</keyword>
<sequence length="164" mass="17028">MAFKDNAVELEERVVAINRVTKVVKGGRRLRFAALVVVGDGNGRVGFGTGKAQEVPEAIRKAVEAAKKNMIEVPMVGTTIPHEVYTNFGGAKVLLKPAVEGSGVAAGGAVRAVIELAGVADITSKSLGSNTPINIVRATVEGLKQLKRAEEVAALRGISVSDLA</sequence>
<evidence type="ECO:0000255" key="1">
    <source>
        <dbReference type="HAMAP-Rule" id="MF_01307"/>
    </source>
</evidence>
<evidence type="ECO:0000305" key="2"/>
<organism>
    <name type="scientific">Streptococcus pyogenes serotype M2 (strain MGAS10270)</name>
    <dbReference type="NCBI Taxonomy" id="370552"/>
    <lineage>
        <taxon>Bacteria</taxon>
        <taxon>Bacillati</taxon>
        <taxon>Bacillota</taxon>
        <taxon>Bacilli</taxon>
        <taxon>Lactobacillales</taxon>
        <taxon>Streptococcaceae</taxon>
        <taxon>Streptococcus</taxon>
    </lineage>
</organism>
<proteinExistence type="inferred from homology"/>
<feature type="chain" id="PRO_0000323209" description="Small ribosomal subunit protein uS5">
    <location>
        <begin position="1"/>
        <end position="164"/>
    </location>
</feature>
<feature type="domain" description="S5 DRBM" evidence="1">
    <location>
        <begin position="10"/>
        <end position="73"/>
    </location>
</feature>
<accession>Q1JJ45</accession>
<protein>
    <recommendedName>
        <fullName evidence="1">Small ribosomal subunit protein uS5</fullName>
    </recommendedName>
    <alternativeName>
        <fullName evidence="2">30S ribosomal protein S5</fullName>
    </alternativeName>
</protein>